<organism>
    <name type="scientific">Trieres chinensis</name>
    <name type="common">Marine centric diatom</name>
    <name type="synonym">Odontella sinensis</name>
    <dbReference type="NCBI Taxonomy" id="1514140"/>
    <lineage>
        <taxon>Eukaryota</taxon>
        <taxon>Sar</taxon>
        <taxon>Stramenopiles</taxon>
        <taxon>Ochrophyta</taxon>
        <taxon>Bacillariophyta</taxon>
        <taxon>Mediophyceae</taxon>
        <taxon>Biddulphiophycidae</taxon>
        <taxon>Eupodiscales</taxon>
        <taxon>Parodontellaceae</taxon>
        <taxon>Trieres</taxon>
    </lineage>
</organism>
<name>RK24_TRICV</name>
<keyword id="KW-0150">Chloroplast</keyword>
<keyword id="KW-0934">Plastid</keyword>
<keyword id="KW-0687">Ribonucleoprotein</keyword>
<keyword id="KW-0689">Ribosomal protein</keyword>
<keyword id="KW-0694">RNA-binding</keyword>
<keyword id="KW-0699">rRNA-binding</keyword>
<geneLocation type="chloroplast"/>
<gene>
    <name type="primary">rpl24</name>
</gene>
<reference key="1">
    <citation type="journal article" date="1995" name="Plant Mol. Biol. Rep.">
        <title>The chloroplast genome of a chlorophyll a+c-containing alga, Odontella sinensis.</title>
        <authorList>
            <person name="Kowallik K.V."/>
            <person name="Stoebe B."/>
            <person name="Schaffran I."/>
            <person name="Kroth-Pancic P."/>
            <person name="Freier U."/>
        </authorList>
    </citation>
    <scope>NUCLEOTIDE SEQUENCE [LARGE SCALE GENOMIC DNA]</scope>
</reference>
<comment type="function">
    <text evidence="1">One of two assembly initiator proteins, it binds directly to the 5'-end of the 23S rRNA, where it nucleates assembly of the 50S subunit.</text>
</comment>
<comment type="subunit">
    <text evidence="1">Part of the 50S ribosomal subunit.</text>
</comment>
<comment type="subcellular location">
    <subcellularLocation>
        <location>Plastid</location>
        <location>Chloroplast</location>
    </subcellularLocation>
</comment>
<comment type="similarity">
    <text evidence="2">Belongs to the universal ribosomal protein uL24 family.</text>
</comment>
<proteinExistence type="inferred from homology"/>
<dbReference type="EMBL" id="Z67753">
    <property type="protein sequence ID" value="CAA91637.1"/>
    <property type="molecule type" value="Genomic_DNA"/>
</dbReference>
<dbReference type="PIR" id="S78264">
    <property type="entry name" value="S78264"/>
</dbReference>
<dbReference type="RefSeq" id="NP_043605.1">
    <property type="nucleotide sequence ID" value="NC_001713.1"/>
</dbReference>
<dbReference type="SMR" id="P49560"/>
<dbReference type="GeneID" id="801799"/>
<dbReference type="GO" id="GO:0009507">
    <property type="term" value="C:chloroplast"/>
    <property type="evidence" value="ECO:0007669"/>
    <property type="project" value="UniProtKB-SubCell"/>
</dbReference>
<dbReference type="GO" id="GO:1990904">
    <property type="term" value="C:ribonucleoprotein complex"/>
    <property type="evidence" value="ECO:0007669"/>
    <property type="project" value="UniProtKB-KW"/>
</dbReference>
<dbReference type="GO" id="GO:0005840">
    <property type="term" value="C:ribosome"/>
    <property type="evidence" value="ECO:0007669"/>
    <property type="project" value="UniProtKB-KW"/>
</dbReference>
<dbReference type="GO" id="GO:0019843">
    <property type="term" value="F:rRNA binding"/>
    <property type="evidence" value="ECO:0007669"/>
    <property type="project" value="UniProtKB-UniRule"/>
</dbReference>
<dbReference type="GO" id="GO:0003735">
    <property type="term" value="F:structural constituent of ribosome"/>
    <property type="evidence" value="ECO:0007669"/>
    <property type="project" value="InterPro"/>
</dbReference>
<dbReference type="GO" id="GO:0006412">
    <property type="term" value="P:translation"/>
    <property type="evidence" value="ECO:0007669"/>
    <property type="project" value="UniProtKB-UniRule"/>
</dbReference>
<dbReference type="CDD" id="cd06089">
    <property type="entry name" value="KOW_RPL26"/>
    <property type="match status" value="1"/>
</dbReference>
<dbReference type="Gene3D" id="2.30.30.30">
    <property type="match status" value="1"/>
</dbReference>
<dbReference type="HAMAP" id="MF_01326_B">
    <property type="entry name" value="Ribosomal_uL24_B"/>
    <property type="match status" value="1"/>
</dbReference>
<dbReference type="InterPro" id="IPR005824">
    <property type="entry name" value="KOW"/>
</dbReference>
<dbReference type="InterPro" id="IPR014722">
    <property type="entry name" value="Rib_uL2_dom2"/>
</dbReference>
<dbReference type="InterPro" id="IPR003256">
    <property type="entry name" value="Ribosomal_uL24"/>
</dbReference>
<dbReference type="InterPro" id="IPR005825">
    <property type="entry name" value="Ribosomal_uL24_CS"/>
</dbReference>
<dbReference type="InterPro" id="IPR041988">
    <property type="entry name" value="Ribosomal_uL24_KOW"/>
</dbReference>
<dbReference type="InterPro" id="IPR008991">
    <property type="entry name" value="Translation_prot_SH3-like_sf"/>
</dbReference>
<dbReference type="NCBIfam" id="TIGR01079">
    <property type="entry name" value="rplX_bact"/>
    <property type="match status" value="1"/>
</dbReference>
<dbReference type="PANTHER" id="PTHR12903">
    <property type="entry name" value="MITOCHONDRIAL RIBOSOMAL PROTEIN L24"/>
    <property type="match status" value="1"/>
</dbReference>
<dbReference type="Pfam" id="PF00467">
    <property type="entry name" value="KOW"/>
    <property type="match status" value="1"/>
</dbReference>
<dbReference type="Pfam" id="PF17136">
    <property type="entry name" value="ribosomal_L24"/>
    <property type="match status" value="1"/>
</dbReference>
<dbReference type="SMART" id="SM00739">
    <property type="entry name" value="KOW"/>
    <property type="match status" value="1"/>
</dbReference>
<dbReference type="SUPFAM" id="SSF50104">
    <property type="entry name" value="Translation proteins SH3-like domain"/>
    <property type="match status" value="1"/>
</dbReference>
<dbReference type="PROSITE" id="PS01108">
    <property type="entry name" value="RIBOSOMAL_L24"/>
    <property type="match status" value="1"/>
</dbReference>
<protein>
    <recommendedName>
        <fullName evidence="2">Large ribosomal subunit protein uL24c</fullName>
    </recommendedName>
    <alternativeName>
        <fullName>50S ribosomal protein L24, chloroplastic</fullName>
    </alternativeName>
</protein>
<sequence length="77" mass="8801">MRKQQKIHVKIGDNVKIITGFDKNKIGKVSKIDRNTGKIIVKGINFKFKHIKPNAENEVGEIKQFEAPIHHSNVKLN</sequence>
<accession>P49560</accession>
<feature type="chain" id="PRO_0000130763" description="Large ribosomal subunit protein uL24c">
    <location>
        <begin position="1"/>
        <end position="77"/>
    </location>
</feature>
<evidence type="ECO:0000250" key="1"/>
<evidence type="ECO:0000305" key="2"/>